<sequence>MTISPPEREAKKVKIVVDRDPVETSFEKWAKPGHFSRTLSKGPTTTTWIWNLHADAHDFDAQTTDLEEISRKVFSAHFGQLGIIFIWLSGMYFHGARFSNYEAWLSDPTHIKPSAQVVWPIVGQEILNGDVGGGFQGIQITSGFFQLWRASGITTELQLYSTAIGGLVMAAAMFFAGWFHFHKSAPKLEWFQNVESMLNHHLSGLLGLGSLAWAGHQIHVSLPINKLLDAGVDPHEIPLPHELILNPSLMAQLYPSFKQGLAPFFTLNWSEYSDFLTFQGGLNPVTGGLWLTDTAHHHLAIAVLFIVAGHMYRTNWGIGHSMKEILDAHKGPFTGEGHKGLYEILTTSWHAQLAINLALFGSLSIIVAHHQYSMPPYPYLATDYATQLSLFTHHNWIGGFCIVGAAAHAAIFMIRDYDPTNNYNNLLDRVIRHRDAIISHLNWVCIFLGFHSFGLYIHNDTMSALGRPADMFSDTAIQLQPVFAQWIQKTHFLAPGFTAPNALASTSPSWGGDVVAVGGKVAMMPISLGTSDFLVHHVHAFTIHVTVLILLKGVLYARSSRLIPDKANLGFRFPCDGPGRGGTCQVSAWDHVFLGLFWMYNAISVVIFHFSWKMQSDVWGTVNASGISHITGGNFAQSANTINGWLRDFLWAQSSQVIQSYGSSLSAYGLIFLGAHFVWAFSLMFLFSGRGYWQELIESIVWAHNKLKVAPAIQPRALSITQGRAVGVAHYLLGGIATTWSFFLARIIAVG</sequence>
<accession>Q3ZJ07</accession>
<reference key="1">
    <citation type="journal article" date="2005" name="Mol. Biol. Evol.">
        <title>The chloroplast genome sequence of the green alga Pseudendoclonium akinetum (Ulvophyceae) reveals unusual structural features and new insights into the branching order of chlorophyte lineages.</title>
        <authorList>
            <person name="Pombert J.-F."/>
            <person name="Otis C."/>
            <person name="Lemieux C."/>
            <person name="Turmel M."/>
        </authorList>
    </citation>
    <scope>NUCLEOTIDE SEQUENCE [LARGE SCALE GENOMIC DNA]</scope>
    <source>
        <strain>UTEX 1912</strain>
    </source>
</reference>
<protein>
    <recommendedName>
        <fullName evidence="1">Photosystem I P700 chlorophyll a apoprotein A1</fullName>
        <ecNumber evidence="1">1.97.1.12</ecNumber>
    </recommendedName>
    <alternativeName>
        <fullName evidence="1">PSI-A</fullName>
    </alternativeName>
    <alternativeName>
        <fullName evidence="1">PsaA</fullName>
    </alternativeName>
</protein>
<keyword id="KW-0004">4Fe-4S</keyword>
<keyword id="KW-0148">Chlorophyll</keyword>
<keyword id="KW-0150">Chloroplast</keyword>
<keyword id="KW-0157">Chromophore</keyword>
<keyword id="KW-0249">Electron transport</keyword>
<keyword id="KW-0408">Iron</keyword>
<keyword id="KW-0411">Iron-sulfur</keyword>
<keyword id="KW-0460">Magnesium</keyword>
<keyword id="KW-0472">Membrane</keyword>
<keyword id="KW-0479">Metal-binding</keyword>
<keyword id="KW-0560">Oxidoreductase</keyword>
<keyword id="KW-0602">Photosynthesis</keyword>
<keyword id="KW-0603">Photosystem I</keyword>
<keyword id="KW-0934">Plastid</keyword>
<keyword id="KW-0793">Thylakoid</keyword>
<keyword id="KW-0812">Transmembrane</keyword>
<keyword id="KW-1133">Transmembrane helix</keyword>
<keyword id="KW-0813">Transport</keyword>
<organism>
    <name type="scientific">Tupiella akineta</name>
    <name type="common">Green alga</name>
    <name type="synonym">Pseudendoclonium akinetum</name>
    <dbReference type="NCBI Taxonomy" id="160070"/>
    <lineage>
        <taxon>Eukaryota</taxon>
        <taxon>Viridiplantae</taxon>
        <taxon>Chlorophyta</taxon>
        <taxon>Ulvophyceae</taxon>
        <taxon>OUU clade</taxon>
        <taxon>Ulotrichales</taxon>
        <taxon>Tupiellaceae</taxon>
        <taxon>Tupiella</taxon>
    </lineage>
</organism>
<feature type="chain" id="PRO_0000275960" description="Photosystem I P700 chlorophyll a apoprotein A1">
    <location>
        <begin position="1"/>
        <end position="751"/>
    </location>
</feature>
<feature type="transmembrane region" description="Helical; Name=I" evidence="1">
    <location>
        <begin position="73"/>
        <end position="96"/>
    </location>
</feature>
<feature type="transmembrane region" description="Helical; Name=II" evidence="1">
    <location>
        <begin position="159"/>
        <end position="182"/>
    </location>
</feature>
<feature type="transmembrane region" description="Helical; Name=III" evidence="1">
    <location>
        <begin position="198"/>
        <end position="222"/>
    </location>
</feature>
<feature type="transmembrane region" description="Helical; Name=IV" evidence="1">
    <location>
        <begin position="294"/>
        <end position="312"/>
    </location>
</feature>
<feature type="transmembrane region" description="Helical; Name=V" evidence="1">
    <location>
        <begin position="349"/>
        <end position="372"/>
    </location>
</feature>
<feature type="transmembrane region" description="Helical; Name=VI" evidence="1">
    <location>
        <begin position="388"/>
        <end position="414"/>
    </location>
</feature>
<feature type="transmembrane region" description="Helical; Name=VII" evidence="1">
    <location>
        <begin position="436"/>
        <end position="458"/>
    </location>
</feature>
<feature type="transmembrane region" description="Helical; Name=VIII" evidence="1">
    <location>
        <begin position="533"/>
        <end position="551"/>
    </location>
</feature>
<feature type="transmembrane region" description="Helical; Name=IX" evidence="1">
    <location>
        <begin position="591"/>
        <end position="612"/>
    </location>
</feature>
<feature type="transmembrane region" description="Helical; Name=X" evidence="1">
    <location>
        <begin position="665"/>
        <end position="687"/>
    </location>
</feature>
<feature type="transmembrane region" description="Helical; Name=XI" evidence="1">
    <location>
        <begin position="725"/>
        <end position="745"/>
    </location>
</feature>
<feature type="binding site" evidence="1">
    <location>
        <position position="575"/>
    </location>
    <ligand>
        <name>[4Fe-4S] cluster</name>
        <dbReference type="ChEBI" id="CHEBI:49883"/>
        <note>ligand shared between dimeric partners</note>
    </ligand>
</feature>
<feature type="binding site" evidence="1">
    <location>
        <position position="584"/>
    </location>
    <ligand>
        <name>[4Fe-4S] cluster</name>
        <dbReference type="ChEBI" id="CHEBI:49883"/>
        <note>ligand shared between dimeric partners</note>
    </ligand>
</feature>
<feature type="binding site" description="axial binding residue" evidence="1">
    <location>
        <position position="676"/>
    </location>
    <ligand>
        <name>chlorophyll a'</name>
        <dbReference type="ChEBI" id="CHEBI:189419"/>
        <label>A1</label>
    </ligand>
    <ligandPart>
        <name>Mg</name>
        <dbReference type="ChEBI" id="CHEBI:25107"/>
    </ligandPart>
</feature>
<feature type="binding site" description="axial binding residue" evidence="1">
    <location>
        <position position="684"/>
    </location>
    <ligand>
        <name>chlorophyll a</name>
        <dbReference type="ChEBI" id="CHEBI:58416"/>
        <label>A3</label>
    </ligand>
    <ligandPart>
        <name>Mg</name>
        <dbReference type="ChEBI" id="CHEBI:25107"/>
    </ligandPart>
</feature>
<feature type="binding site" evidence="1">
    <location>
        <position position="692"/>
    </location>
    <ligand>
        <name>chlorophyll a</name>
        <dbReference type="ChEBI" id="CHEBI:58416"/>
        <label>A3</label>
    </ligand>
</feature>
<feature type="binding site" evidence="1">
    <location>
        <position position="693"/>
    </location>
    <ligand>
        <name>phylloquinone</name>
        <dbReference type="ChEBI" id="CHEBI:18067"/>
        <label>A</label>
    </ligand>
</feature>
<name>PSAA_TUPAK</name>
<dbReference type="EC" id="1.97.1.12" evidence="1"/>
<dbReference type="EMBL" id="AY835431">
    <property type="protein sequence ID" value="AAV80682.1"/>
    <property type="molecule type" value="Genomic_DNA"/>
</dbReference>
<dbReference type="RefSeq" id="YP_636260.1">
    <property type="nucleotide sequence ID" value="NC_008114.1"/>
</dbReference>
<dbReference type="SMR" id="Q3ZJ07"/>
<dbReference type="GeneID" id="4108776"/>
<dbReference type="GO" id="GO:0009535">
    <property type="term" value="C:chloroplast thylakoid membrane"/>
    <property type="evidence" value="ECO:0007669"/>
    <property type="project" value="UniProtKB-SubCell"/>
</dbReference>
<dbReference type="GO" id="GO:0009522">
    <property type="term" value="C:photosystem I"/>
    <property type="evidence" value="ECO:0007669"/>
    <property type="project" value="UniProtKB-KW"/>
</dbReference>
<dbReference type="GO" id="GO:0051539">
    <property type="term" value="F:4 iron, 4 sulfur cluster binding"/>
    <property type="evidence" value="ECO:0007669"/>
    <property type="project" value="UniProtKB-KW"/>
</dbReference>
<dbReference type="GO" id="GO:0016168">
    <property type="term" value="F:chlorophyll binding"/>
    <property type="evidence" value="ECO:0007669"/>
    <property type="project" value="UniProtKB-KW"/>
</dbReference>
<dbReference type="GO" id="GO:0009055">
    <property type="term" value="F:electron transfer activity"/>
    <property type="evidence" value="ECO:0007669"/>
    <property type="project" value="UniProtKB-UniRule"/>
</dbReference>
<dbReference type="GO" id="GO:0000287">
    <property type="term" value="F:magnesium ion binding"/>
    <property type="evidence" value="ECO:0007669"/>
    <property type="project" value="UniProtKB-UniRule"/>
</dbReference>
<dbReference type="GO" id="GO:0016491">
    <property type="term" value="F:oxidoreductase activity"/>
    <property type="evidence" value="ECO:0007669"/>
    <property type="project" value="UniProtKB-KW"/>
</dbReference>
<dbReference type="GO" id="GO:0015979">
    <property type="term" value="P:photosynthesis"/>
    <property type="evidence" value="ECO:0007669"/>
    <property type="project" value="UniProtKB-UniRule"/>
</dbReference>
<dbReference type="FunFam" id="1.20.1130.10:FF:000001">
    <property type="entry name" value="Photosystem I P700 chlorophyll a apoprotein A2"/>
    <property type="match status" value="1"/>
</dbReference>
<dbReference type="Gene3D" id="1.20.1130.10">
    <property type="entry name" value="Photosystem I PsaA/PsaB"/>
    <property type="match status" value="1"/>
</dbReference>
<dbReference type="HAMAP" id="MF_00458">
    <property type="entry name" value="PSI_PsaA"/>
    <property type="match status" value="1"/>
</dbReference>
<dbReference type="InterPro" id="IPR006243">
    <property type="entry name" value="PSI_PsaA"/>
</dbReference>
<dbReference type="InterPro" id="IPR001280">
    <property type="entry name" value="PSI_PsaA/B"/>
</dbReference>
<dbReference type="InterPro" id="IPR020586">
    <property type="entry name" value="PSI_PsaA/B_CS"/>
</dbReference>
<dbReference type="InterPro" id="IPR036408">
    <property type="entry name" value="PSI_PsaA/B_sf"/>
</dbReference>
<dbReference type="NCBIfam" id="TIGR01335">
    <property type="entry name" value="psaA"/>
    <property type="match status" value="1"/>
</dbReference>
<dbReference type="PANTHER" id="PTHR30128">
    <property type="entry name" value="OUTER MEMBRANE PROTEIN, OMPA-RELATED"/>
    <property type="match status" value="1"/>
</dbReference>
<dbReference type="PANTHER" id="PTHR30128:SF19">
    <property type="entry name" value="PHOTOSYSTEM I P700 CHLOROPHYLL A APOPROTEIN A1-RELATED"/>
    <property type="match status" value="1"/>
</dbReference>
<dbReference type="Pfam" id="PF00223">
    <property type="entry name" value="PsaA_PsaB"/>
    <property type="match status" value="1"/>
</dbReference>
<dbReference type="PIRSF" id="PIRSF002905">
    <property type="entry name" value="PSI_A"/>
    <property type="match status" value="1"/>
</dbReference>
<dbReference type="PRINTS" id="PR00257">
    <property type="entry name" value="PHOTSYSPSAAB"/>
</dbReference>
<dbReference type="SUPFAM" id="SSF81558">
    <property type="entry name" value="Photosystem I subunits PsaA/PsaB"/>
    <property type="match status" value="1"/>
</dbReference>
<dbReference type="PROSITE" id="PS00419">
    <property type="entry name" value="PHOTOSYSTEM_I_PSAAB"/>
    <property type="match status" value="1"/>
</dbReference>
<proteinExistence type="inferred from homology"/>
<gene>
    <name evidence="1" type="primary">psaA</name>
</gene>
<geneLocation type="chloroplast"/>
<comment type="function">
    <text>PsaA and PsaB bind P700, the primary electron donor of photosystem I (PSI), as well as the electron acceptors A0, A1 and FX. PSI is a plastocyanin/cytochrome c6-ferredoxin oxidoreductase, converting photonic excitation into a charge separation, which transfers an electron from the donor P700 chlorophyll pair to the spectroscopically characterized acceptors A0, A1, FX, FA and FB in turn. Oxidized P700 is reduced on the lumenal side of the thylakoid membrane by plastocyanin or cytochrome c6.</text>
</comment>
<comment type="catalytic activity">
    <reaction evidence="1">
        <text>reduced [plastocyanin] + hnu + oxidized [2Fe-2S]-[ferredoxin] = oxidized [plastocyanin] + reduced [2Fe-2S]-[ferredoxin]</text>
        <dbReference type="Rhea" id="RHEA:30407"/>
        <dbReference type="Rhea" id="RHEA-COMP:10000"/>
        <dbReference type="Rhea" id="RHEA-COMP:10001"/>
        <dbReference type="Rhea" id="RHEA-COMP:10039"/>
        <dbReference type="Rhea" id="RHEA-COMP:10040"/>
        <dbReference type="ChEBI" id="CHEBI:29036"/>
        <dbReference type="ChEBI" id="CHEBI:30212"/>
        <dbReference type="ChEBI" id="CHEBI:33737"/>
        <dbReference type="ChEBI" id="CHEBI:33738"/>
        <dbReference type="ChEBI" id="CHEBI:49552"/>
        <dbReference type="EC" id="1.97.1.12"/>
    </reaction>
</comment>
<comment type="cofactor">
    <text evidence="1">P700 is a chlorophyll a/chlorophyll a' dimer, A0 is one or more chlorophyll a, A1 is one or both phylloquinones and FX is a shared 4Fe-4S iron-sulfur center.</text>
</comment>
<comment type="subunit">
    <text evidence="1">The PsaA/B heterodimer binds the P700 chlorophyll special pair and subsequent electron acceptors. PSI consists of a core antenna complex that captures photons, and an electron transfer chain that converts photonic excitation into a charge separation. The eukaryotic PSI reaction center is composed of at least 11 subunits.</text>
</comment>
<comment type="subcellular location">
    <subcellularLocation>
        <location evidence="1">Plastid</location>
        <location evidence="1">Chloroplast thylakoid membrane</location>
        <topology evidence="1">Multi-pass membrane protein</topology>
    </subcellularLocation>
</comment>
<comment type="similarity">
    <text evidence="1">Belongs to the PsaA/PsaB family.</text>
</comment>
<evidence type="ECO:0000255" key="1">
    <source>
        <dbReference type="HAMAP-Rule" id="MF_00458"/>
    </source>
</evidence>